<gene>
    <name type="primary">h1-0-a</name>
</gene>
<name>H10A_XENLA</name>
<protein>
    <recommendedName>
        <fullName>Histone H1.0-A</fullName>
    </recommendedName>
    <alternativeName>
        <fullName>H1-SB</fullName>
    </alternativeName>
    <alternativeName>
        <fullName>H1E</fullName>
    </alternativeName>
    <alternativeName>
        <fullName>Histone H1(0)-1</fullName>
    </alternativeName>
    <alternativeName>
        <fullName>Histone H5B</fullName>
    </alternativeName>
    <alternativeName>
        <fullName>XlH5B</fullName>
    </alternativeName>
</protein>
<proteinExistence type="evidence at transcript level"/>
<feature type="chain" id="PRO_0000196009" description="Histone H1.0-A">
    <location>
        <begin position="1"/>
        <end position="194"/>
    </location>
</feature>
<feature type="domain" description="H15" evidence="2">
    <location>
        <begin position="22"/>
        <end position="95"/>
    </location>
</feature>
<feature type="region of interest" description="Disordered" evidence="3">
    <location>
        <begin position="1"/>
        <end position="29"/>
    </location>
</feature>
<feature type="region of interest" description="Disordered" evidence="3">
    <location>
        <begin position="96"/>
        <end position="194"/>
    </location>
</feature>
<feature type="compositionally biased region" description="Basic residues" evidence="3">
    <location>
        <begin position="102"/>
        <end position="164"/>
    </location>
</feature>
<feature type="compositionally biased region" description="Basic residues" evidence="3">
    <location>
        <begin position="172"/>
        <end position="194"/>
    </location>
</feature>
<feature type="unsure residue" description="W or R">
    <location>
        <position position="169"/>
    </location>
</feature>
<feature type="sequence conflict" description="In Ref. 1; M22835." evidence="4" ref="1">
    <original>E</original>
    <variation>K</variation>
    <location>
        <position position="37"/>
    </location>
</feature>
<sequence length="194" mass="21016">MTENSAPAAKPRRSKASKKSTDHPKYSDMILDAVQAEKSRSGSSRQSIQKYIKNNYTVGENADSQIKLSIKRLVTSGTLKQTKGVGASGSFRLAKADEVKKPAKKPKKEIKKAVSPKKAAKPKKAAKSPAKAKKPKVAEKKVKKAPKKKPAPSPRKAKKTKTVRAKPVWASKAKKAKPSKPKAKASPKKSGRKK</sequence>
<keyword id="KW-0158">Chromosome</keyword>
<keyword id="KW-0226">DNA condensation</keyword>
<keyword id="KW-0238">DNA-binding</keyword>
<keyword id="KW-0539">Nucleus</keyword>
<keyword id="KW-1185">Reference proteome</keyword>
<reference key="1">
    <citation type="journal article" date="1988" name="Gene">
        <title>Isolation and expression of cDNA clones coding for two sequence variants of Xenopus laevis histone H5.</title>
        <authorList>
            <person name="Rutledge R.G."/>
            <person name="Neelin J.M."/>
            <person name="Seligy V.L."/>
        </authorList>
    </citation>
    <scope>NUCLEOTIDE SEQUENCE [MRNA]</scope>
    <source>
        <tissue>Erythroid cell</tissue>
    </source>
</reference>
<reference key="2">
    <citation type="journal article" date="1997" name="Gene">
        <title>Characterization of the two H1(0)-encoding genes from Xenopus laevis.</title>
        <authorList>
            <person name="Brocard M."/>
            <person name="Triebe S."/>
            <person name="Peretti M."/>
            <person name="Doenecke D."/>
            <person name="Khochbin S."/>
        </authorList>
    </citation>
    <scope>NUCLEOTIDE SEQUENCE [GENOMIC DNA]</scope>
</reference>
<reference key="3">
    <citation type="submission" date="2004-06" db="EMBL/GenBank/DDBJ databases">
        <authorList>
            <consortium name="NIH - Xenopus Gene Collection (XGC) project"/>
        </authorList>
    </citation>
    <scope>NUCLEOTIDE SEQUENCE [LARGE SCALE MRNA]</scope>
    <source>
        <tissue>Embryo</tissue>
    </source>
</reference>
<comment type="function">
    <text evidence="1">Histones H1 are necessary for the condensation of nucleosome chains into higher-order structures. The histones H1.0 are found in cells that are in terminal stages of differentiation or that have low rates of cell division (By similarity).</text>
</comment>
<comment type="subcellular location">
    <subcellularLocation>
        <location>Nucleus</location>
    </subcellularLocation>
    <subcellularLocation>
        <location>Chromosome</location>
    </subcellularLocation>
</comment>
<comment type="similarity">
    <text evidence="2">Belongs to the histone H1/H5 family.</text>
</comment>
<evidence type="ECO:0000250" key="1"/>
<evidence type="ECO:0000255" key="2">
    <source>
        <dbReference type="PROSITE-ProRule" id="PRU00837"/>
    </source>
</evidence>
<evidence type="ECO:0000256" key="3">
    <source>
        <dbReference type="SAM" id="MobiDB-lite"/>
    </source>
</evidence>
<evidence type="ECO:0000305" key="4"/>
<dbReference type="EMBL" id="M22835">
    <property type="status" value="NOT_ANNOTATED_CDS"/>
    <property type="molecule type" value="mRNA"/>
</dbReference>
<dbReference type="EMBL" id="Z71502">
    <property type="protein sequence ID" value="CAA96129.1"/>
    <property type="molecule type" value="Genomic_DNA"/>
</dbReference>
<dbReference type="EMBL" id="BC054149">
    <property type="protein sequence ID" value="AAH54149.1"/>
    <property type="molecule type" value="mRNA"/>
</dbReference>
<dbReference type="EMBL" id="BC072941">
    <property type="protein sequence ID" value="AAH72941.1"/>
    <property type="molecule type" value="mRNA"/>
</dbReference>
<dbReference type="PIR" id="A30484">
    <property type="entry name" value="A30484"/>
</dbReference>
<dbReference type="SMR" id="P22845"/>
<dbReference type="BioGRID" id="99992">
    <property type="interactions" value="3"/>
</dbReference>
<dbReference type="DNASU" id="398662"/>
<dbReference type="GeneID" id="398662"/>
<dbReference type="KEGG" id="xla:398662"/>
<dbReference type="AGR" id="Xenbase:XB-GENE-865333"/>
<dbReference type="CTD" id="398662"/>
<dbReference type="Xenbase" id="XB-GENE-865333">
    <property type="gene designation" value="h1-0.L"/>
</dbReference>
<dbReference type="OMA" id="PTMVNAH"/>
<dbReference type="OrthoDB" id="1110759at2759"/>
<dbReference type="Proteomes" id="UP000186698">
    <property type="component" value="Chromosome 4L"/>
</dbReference>
<dbReference type="Bgee" id="398662">
    <property type="expression patterns" value="Expressed in internal ear and 20 other cell types or tissues"/>
</dbReference>
<dbReference type="GO" id="GO:0000786">
    <property type="term" value="C:nucleosome"/>
    <property type="evidence" value="ECO:0007669"/>
    <property type="project" value="InterPro"/>
</dbReference>
<dbReference type="GO" id="GO:0005634">
    <property type="term" value="C:nucleus"/>
    <property type="evidence" value="ECO:0007669"/>
    <property type="project" value="UniProtKB-SubCell"/>
</dbReference>
<dbReference type="GO" id="GO:0003690">
    <property type="term" value="F:double-stranded DNA binding"/>
    <property type="evidence" value="ECO:0007669"/>
    <property type="project" value="TreeGrafter"/>
</dbReference>
<dbReference type="GO" id="GO:0031492">
    <property type="term" value="F:nucleosomal DNA binding"/>
    <property type="evidence" value="ECO:0007669"/>
    <property type="project" value="TreeGrafter"/>
</dbReference>
<dbReference type="GO" id="GO:0030527">
    <property type="term" value="F:structural constituent of chromatin"/>
    <property type="evidence" value="ECO:0007669"/>
    <property type="project" value="InterPro"/>
</dbReference>
<dbReference type="GO" id="GO:0030261">
    <property type="term" value="P:chromosome condensation"/>
    <property type="evidence" value="ECO:0007669"/>
    <property type="project" value="UniProtKB-KW"/>
</dbReference>
<dbReference type="GO" id="GO:0045910">
    <property type="term" value="P:negative regulation of DNA recombination"/>
    <property type="evidence" value="ECO:0007669"/>
    <property type="project" value="TreeGrafter"/>
</dbReference>
<dbReference type="GO" id="GO:0006334">
    <property type="term" value="P:nucleosome assembly"/>
    <property type="evidence" value="ECO:0007669"/>
    <property type="project" value="InterPro"/>
</dbReference>
<dbReference type="CDD" id="cd00073">
    <property type="entry name" value="H15"/>
    <property type="match status" value="1"/>
</dbReference>
<dbReference type="FunFam" id="1.10.10.10:FF:000140">
    <property type="entry name" value="Histone H1.0"/>
    <property type="match status" value="1"/>
</dbReference>
<dbReference type="Gene3D" id="1.10.10.10">
    <property type="entry name" value="Winged helix-like DNA-binding domain superfamily/Winged helix DNA-binding domain"/>
    <property type="match status" value="1"/>
</dbReference>
<dbReference type="InterPro" id="IPR005819">
    <property type="entry name" value="H1/H5"/>
</dbReference>
<dbReference type="InterPro" id="IPR005818">
    <property type="entry name" value="Histone_H1/H5_H15"/>
</dbReference>
<dbReference type="InterPro" id="IPR036388">
    <property type="entry name" value="WH-like_DNA-bd_sf"/>
</dbReference>
<dbReference type="InterPro" id="IPR036390">
    <property type="entry name" value="WH_DNA-bd_sf"/>
</dbReference>
<dbReference type="PANTHER" id="PTHR11467">
    <property type="entry name" value="HISTONE H1"/>
    <property type="match status" value="1"/>
</dbReference>
<dbReference type="PANTHER" id="PTHR11467:SF182">
    <property type="entry name" value="HISTONE H1.0"/>
    <property type="match status" value="1"/>
</dbReference>
<dbReference type="Pfam" id="PF00538">
    <property type="entry name" value="Linker_histone"/>
    <property type="match status" value="1"/>
</dbReference>
<dbReference type="PRINTS" id="PR00624">
    <property type="entry name" value="HISTONEH5"/>
</dbReference>
<dbReference type="SMART" id="SM00526">
    <property type="entry name" value="H15"/>
    <property type="match status" value="1"/>
</dbReference>
<dbReference type="SUPFAM" id="SSF46785">
    <property type="entry name" value="Winged helix' DNA-binding domain"/>
    <property type="match status" value="1"/>
</dbReference>
<dbReference type="PROSITE" id="PS51504">
    <property type="entry name" value="H15"/>
    <property type="match status" value="1"/>
</dbReference>
<organism>
    <name type="scientific">Xenopus laevis</name>
    <name type="common">African clawed frog</name>
    <dbReference type="NCBI Taxonomy" id="8355"/>
    <lineage>
        <taxon>Eukaryota</taxon>
        <taxon>Metazoa</taxon>
        <taxon>Chordata</taxon>
        <taxon>Craniata</taxon>
        <taxon>Vertebrata</taxon>
        <taxon>Euteleostomi</taxon>
        <taxon>Amphibia</taxon>
        <taxon>Batrachia</taxon>
        <taxon>Anura</taxon>
        <taxon>Pipoidea</taxon>
        <taxon>Pipidae</taxon>
        <taxon>Xenopodinae</taxon>
        <taxon>Xenopus</taxon>
        <taxon>Xenopus</taxon>
    </lineage>
</organism>
<accession>P22845</accession>
<accession>Q7SZ41</accession>
<accession>Q91759</accession>